<evidence type="ECO:0000250" key="1"/>
<evidence type="ECO:0000305" key="2"/>
<sequence>MKFLVVGAGGVGGYIGGRLSEKGNDVTFLVRQKRAEQLKKTGLVIHSEKGNVSFQPELISAGETGQFDVVIIASKAYSLGQVIEDVKPFIHQESVIIPFLNGYRHYEQLFAAFSKEQVLGGLCFIESALDNKGEIHHTSASHRFVFGEWNGERTERIRALEEAFSGVKAEVIISGHIEKDIWKKYLFIAAQAGITTLFQRPLGPILATEAGRHTAQTLIGEICTVLRKEGVPADPALEEESFRTMTSMSYHMKSSMLRDMENGQTTEGDHLHGFLIEKAKRLSLAAPVLETVYANLQMYEAEK</sequence>
<gene>
    <name type="primary">ykpB</name>
    <name type="ordered locus">BSU14440</name>
</gene>
<accession>O31717</accession>
<accession>Q7BVR4</accession>
<proteinExistence type="inferred from homology"/>
<comment type="similarity">
    <text evidence="2">Belongs to the ketopantoate reductase family.</text>
</comment>
<name>YKPB_BACSU</name>
<reference key="1">
    <citation type="submission" date="1997-07" db="EMBL/GenBank/DDBJ databases">
        <title>Sequence analysis of the mobA-ampS region of the Bacillus subtilis chromosome.</title>
        <authorList>
            <person name="Caldwell R.M."/>
            <person name="Ferrari E."/>
        </authorList>
    </citation>
    <scope>NUCLEOTIDE SEQUENCE [GENOMIC DNA]</scope>
    <source>
        <strain>168</strain>
    </source>
</reference>
<reference key="2">
    <citation type="journal article" date="1997" name="Nature">
        <title>The complete genome sequence of the Gram-positive bacterium Bacillus subtilis.</title>
        <authorList>
            <person name="Kunst F."/>
            <person name="Ogasawara N."/>
            <person name="Moszer I."/>
            <person name="Albertini A.M."/>
            <person name="Alloni G."/>
            <person name="Azevedo V."/>
            <person name="Bertero M.G."/>
            <person name="Bessieres P."/>
            <person name="Bolotin A."/>
            <person name="Borchert S."/>
            <person name="Borriss R."/>
            <person name="Boursier L."/>
            <person name="Brans A."/>
            <person name="Braun M."/>
            <person name="Brignell S.C."/>
            <person name="Bron S."/>
            <person name="Brouillet S."/>
            <person name="Bruschi C.V."/>
            <person name="Caldwell B."/>
            <person name="Capuano V."/>
            <person name="Carter N.M."/>
            <person name="Choi S.-K."/>
            <person name="Codani J.-J."/>
            <person name="Connerton I.F."/>
            <person name="Cummings N.J."/>
            <person name="Daniel R.A."/>
            <person name="Denizot F."/>
            <person name="Devine K.M."/>
            <person name="Duesterhoeft A."/>
            <person name="Ehrlich S.D."/>
            <person name="Emmerson P.T."/>
            <person name="Entian K.-D."/>
            <person name="Errington J."/>
            <person name="Fabret C."/>
            <person name="Ferrari E."/>
            <person name="Foulger D."/>
            <person name="Fritz C."/>
            <person name="Fujita M."/>
            <person name="Fujita Y."/>
            <person name="Fuma S."/>
            <person name="Galizzi A."/>
            <person name="Galleron N."/>
            <person name="Ghim S.-Y."/>
            <person name="Glaser P."/>
            <person name="Goffeau A."/>
            <person name="Golightly E.J."/>
            <person name="Grandi G."/>
            <person name="Guiseppi G."/>
            <person name="Guy B.J."/>
            <person name="Haga K."/>
            <person name="Haiech J."/>
            <person name="Harwood C.R."/>
            <person name="Henaut A."/>
            <person name="Hilbert H."/>
            <person name="Holsappel S."/>
            <person name="Hosono S."/>
            <person name="Hullo M.-F."/>
            <person name="Itaya M."/>
            <person name="Jones L.-M."/>
            <person name="Joris B."/>
            <person name="Karamata D."/>
            <person name="Kasahara Y."/>
            <person name="Klaerr-Blanchard M."/>
            <person name="Klein C."/>
            <person name="Kobayashi Y."/>
            <person name="Koetter P."/>
            <person name="Koningstein G."/>
            <person name="Krogh S."/>
            <person name="Kumano M."/>
            <person name="Kurita K."/>
            <person name="Lapidus A."/>
            <person name="Lardinois S."/>
            <person name="Lauber J."/>
            <person name="Lazarevic V."/>
            <person name="Lee S.-M."/>
            <person name="Levine A."/>
            <person name="Liu H."/>
            <person name="Masuda S."/>
            <person name="Mauel C."/>
            <person name="Medigue C."/>
            <person name="Medina N."/>
            <person name="Mellado R.P."/>
            <person name="Mizuno M."/>
            <person name="Moestl D."/>
            <person name="Nakai S."/>
            <person name="Noback M."/>
            <person name="Noone D."/>
            <person name="O'Reilly M."/>
            <person name="Ogawa K."/>
            <person name="Ogiwara A."/>
            <person name="Oudega B."/>
            <person name="Park S.-H."/>
            <person name="Parro V."/>
            <person name="Pohl T.M."/>
            <person name="Portetelle D."/>
            <person name="Porwollik S."/>
            <person name="Prescott A.M."/>
            <person name="Presecan E."/>
            <person name="Pujic P."/>
            <person name="Purnelle B."/>
            <person name="Rapoport G."/>
            <person name="Rey M."/>
            <person name="Reynolds S."/>
            <person name="Rieger M."/>
            <person name="Rivolta C."/>
            <person name="Rocha E."/>
            <person name="Roche B."/>
            <person name="Rose M."/>
            <person name="Sadaie Y."/>
            <person name="Sato T."/>
            <person name="Scanlan E."/>
            <person name="Schleich S."/>
            <person name="Schroeter R."/>
            <person name="Scoffone F."/>
            <person name="Sekiguchi J."/>
            <person name="Sekowska A."/>
            <person name="Seror S.J."/>
            <person name="Serror P."/>
            <person name="Shin B.-S."/>
            <person name="Soldo B."/>
            <person name="Sorokin A."/>
            <person name="Tacconi E."/>
            <person name="Takagi T."/>
            <person name="Takahashi H."/>
            <person name="Takemaru K."/>
            <person name="Takeuchi M."/>
            <person name="Tamakoshi A."/>
            <person name="Tanaka T."/>
            <person name="Terpstra P."/>
            <person name="Tognoni A."/>
            <person name="Tosato V."/>
            <person name="Uchiyama S."/>
            <person name="Vandenbol M."/>
            <person name="Vannier F."/>
            <person name="Vassarotti A."/>
            <person name="Viari A."/>
            <person name="Wambutt R."/>
            <person name="Wedler E."/>
            <person name="Wedler H."/>
            <person name="Weitzenegger T."/>
            <person name="Winters P."/>
            <person name="Wipat A."/>
            <person name="Yamamoto H."/>
            <person name="Yamane K."/>
            <person name="Yasumoto K."/>
            <person name="Yata K."/>
            <person name="Yoshida K."/>
            <person name="Yoshikawa H.-F."/>
            <person name="Zumstein E."/>
            <person name="Yoshikawa H."/>
            <person name="Danchin A."/>
        </authorList>
    </citation>
    <scope>NUCLEOTIDE SEQUENCE [LARGE SCALE GENOMIC DNA]</scope>
    <source>
        <strain>168</strain>
    </source>
</reference>
<dbReference type="EC" id="1.1.1.-"/>
<dbReference type="EMBL" id="AF012285">
    <property type="protein sequence ID" value="AAC24919.1"/>
    <property type="molecule type" value="Genomic_DNA"/>
</dbReference>
<dbReference type="EMBL" id="AL009126">
    <property type="protein sequence ID" value="CAB13317.1"/>
    <property type="molecule type" value="Genomic_DNA"/>
</dbReference>
<dbReference type="PIR" id="F69861">
    <property type="entry name" value="F69861"/>
</dbReference>
<dbReference type="RefSeq" id="WP_003245639.1">
    <property type="nucleotide sequence ID" value="NZ_OZ025638.1"/>
</dbReference>
<dbReference type="SMR" id="O31717"/>
<dbReference type="FunCoup" id="O31717">
    <property type="interactions" value="184"/>
</dbReference>
<dbReference type="STRING" id="224308.BSU14440"/>
<dbReference type="PaxDb" id="224308-BSU14440"/>
<dbReference type="EnsemblBacteria" id="CAB13317">
    <property type="protein sequence ID" value="CAB13317"/>
    <property type="gene ID" value="BSU_14440"/>
</dbReference>
<dbReference type="GeneID" id="938752"/>
<dbReference type="KEGG" id="bsu:BSU14440"/>
<dbReference type="PATRIC" id="fig|224308.179.peg.1574"/>
<dbReference type="eggNOG" id="COG1893">
    <property type="taxonomic scope" value="Bacteria"/>
</dbReference>
<dbReference type="InParanoid" id="O31717"/>
<dbReference type="OrthoDB" id="9793586at2"/>
<dbReference type="PhylomeDB" id="O31717"/>
<dbReference type="BioCyc" id="BSUB:BSU14440-MONOMER"/>
<dbReference type="Proteomes" id="UP000001570">
    <property type="component" value="Chromosome"/>
</dbReference>
<dbReference type="GO" id="GO:0005737">
    <property type="term" value="C:cytoplasm"/>
    <property type="evidence" value="ECO:0000318"/>
    <property type="project" value="GO_Central"/>
</dbReference>
<dbReference type="GO" id="GO:0008677">
    <property type="term" value="F:2-dehydropantoate 2-reductase activity"/>
    <property type="evidence" value="ECO:0007669"/>
    <property type="project" value="InterPro"/>
</dbReference>
<dbReference type="GO" id="GO:0015940">
    <property type="term" value="P:pantothenate biosynthetic process"/>
    <property type="evidence" value="ECO:0007669"/>
    <property type="project" value="InterPro"/>
</dbReference>
<dbReference type="FunFam" id="1.10.1040.10:FF:000017">
    <property type="entry name" value="2-dehydropantoate 2-reductase"/>
    <property type="match status" value="1"/>
</dbReference>
<dbReference type="FunFam" id="3.40.50.720:FF:000307">
    <property type="entry name" value="2-dehydropantoate 2-reductase"/>
    <property type="match status" value="1"/>
</dbReference>
<dbReference type="Gene3D" id="1.10.1040.10">
    <property type="entry name" value="N-(1-d-carboxylethyl)-l-norvaline Dehydrogenase, domain 2"/>
    <property type="match status" value="1"/>
</dbReference>
<dbReference type="Gene3D" id="3.40.50.720">
    <property type="entry name" value="NAD(P)-binding Rossmann-like Domain"/>
    <property type="match status" value="1"/>
</dbReference>
<dbReference type="InterPro" id="IPR008927">
    <property type="entry name" value="6-PGluconate_DH-like_C_sf"/>
</dbReference>
<dbReference type="InterPro" id="IPR013328">
    <property type="entry name" value="6PGD_dom2"/>
</dbReference>
<dbReference type="InterPro" id="IPR003710">
    <property type="entry name" value="ApbA"/>
</dbReference>
<dbReference type="InterPro" id="IPR013752">
    <property type="entry name" value="KPA_reductase"/>
</dbReference>
<dbReference type="InterPro" id="IPR051402">
    <property type="entry name" value="KPR-Related"/>
</dbReference>
<dbReference type="InterPro" id="IPR013332">
    <property type="entry name" value="KPR_N"/>
</dbReference>
<dbReference type="InterPro" id="IPR036291">
    <property type="entry name" value="NAD(P)-bd_dom_sf"/>
</dbReference>
<dbReference type="NCBIfam" id="TIGR00745">
    <property type="entry name" value="apbA_panE"/>
    <property type="match status" value="1"/>
</dbReference>
<dbReference type="PANTHER" id="PTHR21708:SF26">
    <property type="entry name" value="2-DEHYDROPANTOATE 2-REDUCTASE"/>
    <property type="match status" value="1"/>
</dbReference>
<dbReference type="PANTHER" id="PTHR21708">
    <property type="entry name" value="PROBABLE 2-DEHYDROPANTOATE 2-REDUCTASE"/>
    <property type="match status" value="1"/>
</dbReference>
<dbReference type="Pfam" id="PF02558">
    <property type="entry name" value="ApbA"/>
    <property type="match status" value="1"/>
</dbReference>
<dbReference type="Pfam" id="PF08546">
    <property type="entry name" value="ApbA_C"/>
    <property type="match status" value="1"/>
</dbReference>
<dbReference type="SUPFAM" id="SSF48179">
    <property type="entry name" value="6-phosphogluconate dehydrogenase C-terminal domain-like"/>
    <property type="match status" value="1"/>
</dbReference>
<dbReference type="SUPFAM" id="SSF51735">
    <property type="entry name" value="NAD(P)-binding Rossmann-fold domains"/>
    <property type="match status" value="1"/>
</dbReference>
<keyword id="KW-0521">NADP</keyword>
<keyword id="KW-0560">Oxidoreductase</keyword>
<keyword id="KW-1185">Reference proteome</keyword>
<organism>
    <name type="scientific">Bacillus subtilis (strain 168)</name>
    <dbReference type="NCBI Taxonomy" id="224308"/>
    <lineage>
        <taxon>Bacteria</taxon>
        <taxon>Bacillati</taxon>
        <taxon>Bacillota</taxon>
        <taxon>Bacilli</taxon>
        <taxon>Bacillales</taxon>
        <taxon>Bacillaceae</taxon>
        <taxon>Bacillus</taxon>
    </lineage>
</organism>
<feature type="chain" id="PRO_0000376995" description="Uncharacterized oxidoreductase YkpB">
    <location>
        <begin position="1"/>
        <end position="303"/>
    </location>
</feature>
<feature type="active site" description="Proton donor" evidence="1">
    <location>
        <position position="184"/>
    </location>
</feature>
<feature type="binding site" evidence="1">
    <location>
        <begin position="7"/>
        <end position="12"/>
    </location>
    <ligand>
        <name>NADP(+)</name>
        <dbReference type="ChEBI" id="CHEBI:58349"/>
    </ligand>
</feature>
<feature type="binding site" evidence="1">
    <location>
        <position position="101"/>
    </location>
    <ligand>
        <name>NADP(+)</name>
        <dbReference type="ChEBI" id="CHEBI:58349"/>
    </ligand>
</feature>
<feature type="binding site" evidence="1">
    <location>
        <position position="267"/>
    </location>
    <ligand>
        <name>NADP(+)</name>
        <dbReference type="ChEBI" id="CHEBI:58349"/>
    </ligand>
</feature>
<protein>
    <recommendedName>
        <fullName>Uncharacterized oxidoreductase YkpB</fullName>
        <ecNumber>1.1.1.-</ecNumber>
    </recommendedName>
</protein>